<accession>Q55CB8</accession>
<proteinExistence type="inferred from homology"/>
<dbReference type="EC" id="3.6.5.2" evidence="2"/>
<dbReference type="EMBL" id="AAFI02000005">
    <property type="protein sequence ID" value="EAL72412.1"/>
    <property type="molecule type" value="Genomic_DNA"/>
</dbReference>
<dbReference type="RefSeq" id="XP_646563.1">
    <property type="nucleotide sequence ID" value="XM_641471.1"/>
</dbReference>
<dbReference type="SMR" id="Q55CB8"/>
<dbReference type="FunCoup" id="Q55CB8">
    <property type="interactions" value="3"/>
</dbReference>
<dbReference type="STRING" id="44689.Q55CB8"/>
<dbReference type="PaxDb" id="44689-DDB0229433"/>
<dbReference type="EnsemblProtists" id="EAL72412">
    <property type="protein sequence ID" value="EAL72412"/>
    <property type="gene ID" value="DDB_G0270124"/>
</dbReference>
<dbReference type="GeneID" id="8617531"/>
<dbReference type="KEGG" id="ddi:DDB_G0270124"/>
<dbReference type="dictyBase" id="DDB_G0270124">
    <property type="gene designation" value="rasX"/>
</dbReference>
<dbReference type="VEuPathDB" id="AmoebaDB:DDB_G0270124"/>
<dbReference type="eggNOG" id="KOG0395">
    <property type="taxonomic scope" value="Eukaryota"/>
</dbReference>
<dbReference type="HOGENOM" id="CLU_041217_9_8_1"/>
<dbReference type="InParanoid" id="Q55CB8"/>
<dbReference type="OMA" id="HYREQIR"/>
<dbReference type="PhylomeDB" id="Q55CB8"/>
<dbReference type="PRO" id="PR:Q55CB8"/>
<dbReference type="Proteomes" id="UP000002195">
    <property type="component" value="Chromosome 1"/>
</dbReference>
<dbReference type="GO" id="GO:0005886">
    <property type="term" value="C:plasma membrane"/>
    <property type="evidence" value="ECO:0000318"/>
    <property type="project" value="GO_Central"/>
</dbReference>
<dbReference type="GO" id="GO:0003925">
    <property type="term" value="F:G protein activity"/>
    <property type="evidence" value="ECO:0007669"/>
    <property type="project" value="UniProtKB-EC"/>
</dbReference>
<dbReference type="GO" id="GO:0019003">
    <property type="term" value="F:GDP binding"/>
    <property type="evidence" value="ECO:0000318"/>
    <property type="project" value="GO_Central"/>
</dbReference>
<dbReference type="GO" id="GO:0005525">
    <property type="term" value="F:GTP binding"/>
    <property type="evidence" value="ECO:0000318"/>
    <property type="project" value="GO_Central"/>
</dbReference>
<dbReference type="GO" id="GO:0003924">
    <property type="term" value="F:GTPase activity"/>
    <property type="evidence" value="ECO:0000318"/>
    <property type="project" value="GO_Central"/>
</dbReference>
<dbReference type="GO" id="GO:0044351">
    <property type="term" value="P:macropinocytosis"/>
    <property type="evidence" value="ECO:0000316"/>
    <property type="project" value="dictyBase"/>
</dbReference>
<dbReference type="GO" id="GO:0007165">
    <property type="term" value="P:signal transduction"/>
    <property type="evidence" value="ECO:0007669"/>
    <property type="project" value="InterPro"/>
</dbReference>
<dbReference type="CDD" id="cd00876">
    <property type="entry name" value="Ras"/>
    <property type="match status" value="1"/>
</dbReference>
<dbReference type="FunFam" id="3.40.50.300:FF:000080">
    <property type="entry name" value="Ras-like GTPase Ras1"/>
    <property type="match status" value="1"/>
</dbReference>
<dbReference type="Gene3D" id="3.40.50.300">
    <property type="entry name" value="P-loop containing nucleotide triphosphate hydrolases"/>
    <property type="match status" value="1"/>
</dbReference>
<dbReference type="InterPro" id="IPR027417">
    <property type="entry name" value="P-loop_NTPase"/>
</dbReference>
<dbReference type="InterPro" id="IPR005225">
    <property type="entry name" value="Small_GTP-bd"/>
</dbReference>
<dbReference type="InterPro" id="IPR001806">
    <property type="entry name" value="Small_GTPase"/>
</dbReference>
<dbReference type="InterPro" id="IPR020849">
    <property type="entry name" value="Small_GTPase_Ras-type"/>
</dbReference>
<dbReference type="NCBIfam" id="TIGR00231">
    <property type="entry name" value="small_GTP"/>
    <property type="match status" value="1"/>
</dbReference>
<dbReference type="PANTHER" id="PTHR24070">
    <property type="entry name" value="RAS, DI-RAS, AND RHEB FAMILY MEMBERS OF SMALL GTPASE SUPERFAMILY"/>
    <property type="match status" value="1"/>
</dbReference>
<dbReference type="Pfam" id="PF00071">
    <property type="entry name" value="Ras"/>
    <property type="match status" value="1"/>
</dbReference>
<dbReference type="PRINTS" id="PR00449">
    <property type="entry name" value="RASTRNSFRMNG"/>
</dbReference>
<dbReference type="SMART" id="SM00175">
    <property type="entry name" value="RAB"/>
    <property type="match status" value="1"/>
</dbReference>
<dbReference type="SMART" id="SM00176">
    <property type="entry name" value="RAN"/>
    <property type="match status" value="1"/>
</dbReference>
<dbReference type="SMART" id="SM00173">
    <property type="entry name" value="RAS"/>
    <property type="match status" value="1"/>
</dbReference>
<dbReference type="SMART" id="SM00174">
    <property type="entry name" value="RHO"/>
    <property type="match status" value="1"/>
</dbReference>
<dbReference type="SUPFAM" id="SSF52540">
    <property type="entry name" value="P-loop containing nucleoside triphosphate hydrolases"/>
    <property type="match status" value="1"/>
</dbReference>
<dbReference type="PROSITE" id="PS51421">
    <property type="entry name" value="RAS"/>
    <property type="match status" value="1"/>
</dbReference>
<comment type="function">
    <text evidence="2">Ras proteins bind GDP/GTP and possess intrinsic GTPase activity.</text>
</comment>
<comment type="catalytic activity">
    <reaction evidence="2">
        <text>GTP + H2O = GDP + phosphate + H(+)</text>
        <dbReference type="Rhea" id="RHEA:19669"/>
        <dbReference type="ChEBI" id="CHEBI:15377"/>
        <dbReference type="ChEBI" id="CHEBI:15378"/>
        <dbReference type="ChEBI" id="CHEBI:37565"/>
        <dbReference type="ChEBI" id="CHEBI:43474"/>
        <dbReference type="ChEBI" id="CHEBI:58189"/>
        <dbReference type="EC" id="3.6.5.2"/>
    </reaction>
</comment>
<comment type="subcellular location">
    <subcellularLocation>
        <location evidence="3">Cell membrane</location>
        <topology evidence="3">Lipid-anchor</topology>
        <orientation evidence="3">Cytoplasmic side</orientation>
    </subcellularLocation>
</comment>
<comment type="similarity">
    <text evidence="3">Belongs to the small GTPase superfamily. Ras family.</text>
</comment>
<feature type="chain" id="PRO_0000365567" description="Ras-like protein rasX">
    <location>
        <begin position="1"/>
        <end position="210"/>
    </location>
</feature>
<feature type="propeptide" id="PRO_0000365568" description="Removed in mature form" evidence="1">
    <location>
        <begin position="211"/>
        <end position="213"/>
    </location>
</feature>
<feature type="short sequence motif" description="Effector region">
    <location>
        <begin position="38"/>
        <end position="46"/>
    </location>
</feature>
<feature type="binding site" evidence="1">
    <location>
        <begin position="16"/>
        <end position="23"/>
    </location>
    <ligand>
        <name>GTP</name>
        <dbReference type="ChEBI" id="CHEBI:37565"/>
    </ligand>
</feature>
<feature type="binding site" evidence="1">
    <location>
        <begin position="63"/>
        <end position="67"/>
    </location>
    <ligand>
        <name>GTP</name>
        <dbReference type="ChEBI" id="CHEBI:37565"/>
    </ligand>
</feature>
<feature type="binding site" evidence="1">
    <location>
        <begin position="122"/>
        <end position="125"/>
    </location>
    <ligand>
        <name>GTP</name>
        <dbReference type="ChEBI" id="CHEBI:37565"/>
    </ligand>
</feature>
<feature type="modified residue" description="Cysteine methyl ester" evidence="1">
    <location>
        <position position="210"/>
    </location>
</feature>
<feature type="lipid moiety-binding region" description="S-geranylgeranyl cysteine" evidence="1">
    <location>
        <position position="210"/>
    </location>
</feature>
<evidence type="ECO:0000250" key="1"/>
<evidence type="ECO:0000250" key="2">
    <source>
        <dbReference type="UniProtKB" id="P32253"/>
    </source>
</evidence>
<evidence type="ECO:0000305" key="3"/>
<name>RASX_DICDI</name>
<protein>
    <recommendedName>
        <fullName>Ras-like protein rasX</fullName>
        <ecNumber evidence="2">3.6.5.2</ecNumber>
    </recommendedName>
</protein>
<keyword id="KW-1003">Cell membrane</keyword>
<keyword id="KW-0342">GTP-binding</keyword>
<keyword id="KW-0378">Hydrolase</keyword>
<keyword id="KW-0449">Lipoprotein</keyword>
<keyword id="KW-0472">Membrane</keyword>
<keyword id="KW-0488">Methylation</keyword>
<keyword id="KW-0547">Nucleotide-binding</keyword>
<keyword id="KW-0636">Prenylation</keyword>
<keyword id="KW-1185">Reference proteome</keyword>
<organism>
    <name type="scientific">Dictyostelium discoideum</name>
    <name type="common">Social amoeba</name>
    <dbReference type="NCBI Taxonomy" id="44689"/>
    <lineage>
        <taxon>Eukaryota</taxon>
        <taxon>Amoebozoa</taxon>
        <taxon>Evosea</taxon>
        <taxon>Eumycetozoa</taxon>
        <taxon>Dictyostelia</taxon>
        <taxon>Dictyosteliales</taxon>
        <taxon>Dictyosteliaceae</taxon>
        <taxon>Dictyostelium</taxon>
    </lineage>
</organism>
<sequence length="213" mass="24538">MSGYKNNNLVKLCIMGDGGVGKTAVTIQFISNHFVHYYDPTIEDSYRKQCVIDDQVYMLDILDTAGQDELTAMRDQWIRSCEGFVLVYSVTSRSSFDQIAFFKEQINRVLDSDDVPIMMIGNKSDLDDERQVTYQEGKDLARCFGMSFMEVSAKTRSNIEEVFNETVRCVKRKYDLHNKDKSKDGKDIKKKNSIIKKLNQKVNNTKNSICKMM</sequence>
<reference key="1">
    <citation type="journal article" date="2005" name="Nature">
        <title>The genome of the social amoeba Dictyostelium discoideum.</title>
        <authorList>
            <person name="Eichinger L."/>
            <person name="Pachebat J.A."/>
            <person name="Gloeckner G."/>
            <person name="Rajandream M.A."/>
            <person name="Sucgang R."/>
            <person name="Berriman M."/>
            <person name="Song J."/>
            <person name="Olsen R."/>
            <person name="Szafranski K."/>
            <person name="Xu Q."/>
            <person name="Tunggal B."/>
            <person name="Kummerfeld S."/>
            <person name="Madera M."/>
            <person name="Konfortov B.A."/>
            <person name="Rivero F."/>
            <person name="Bankier A.T."/>
            <person name="Lehmann R."/>
            <person name="Hamlin N."/>
            <person name="Davies R."/>
            <person name="Gaudet P."/>
            <person name="Fey P."/>
            <person name="Pilcher K."/>
            <person name="Chen G."/>
            <person name="Saunders D."/>
            <person name="Sodergren E.J."/>
            <person name="Davis P."/>
            <person name="Kerhornou A."/>
            <person name="Nie X."/>
            <person name="Hall N."/>
            <person name="Anjard C."/>
            <person name="Hemphill L."/>
            <person name="Bason N."/>
            <person name="Farbrother P."/>
            <person name="Desany B."/>
            <person name="Just E."/>
            <person name="Morio T."/>
            <person name="Rost R."/>
            <person name="Churcher C.M."/>
            <person name="Cooper J."/>
            <person name="Haydock S."/>
            <person name="van Driessche N."/>
            <person name="Cronin A."/>
            <person name="Goodhead I."/>
            <person name="Muzny D.M."/>
            <person name="Mourier T."/>
            <person name="Pain A."/>
            <person name="Lu M."/>
            <person name="Harper D."/>
            <person name="Lindsay R."/>
            <person name="Hauser H."/>
            <person name="James K.D."/>
            <person name="Quiles M."/>
            <person name="Madan Babu M."/>
            <person name="Saito T."/>
            <person name="Buchrieser C."/>
            <person name="Wardroper A."/>
            <person name="Felder M."/>
            <person name="Thangavelu M."/>
            <person name="Johnson D."/>
            <person name="Knights A."/>
            <person name="Loulseged H."/>
            <person name="Mungall K.L."/>
            <person name="Oliver K."/>
            <person name="Price C."/>
            <person name="Quail M.A."/>
            <person name="Urushihara H."/>
            <person name="Hernandez J."/>
            <person name="Rabbinowitsch E."/>
            <person name="Steffen D."/>
            <person name="Sanders M."/>
            <person name="Ma J."/>
            <person name="Kohara Y."/>
            <person name="Sharp S."/>
            <person name="Simmonds M.N."/>
            <person name="Spiegler S."/>
            <person name="Tivey A."/>
            <person name="Sugano S."/>
            <person name="White B."/>
            <person name="Walker D."/>
            <person name="Woodward J.R."/>
            <person name="Winckler T."/>
            <person name="Tanaka Y."/>
            <person name="Shaulsky G."/>
            <person name="Schleicher M."/>
            <person name="Weinstock G.M."/>
            <person name="Rosenthal A."/>
            <person name="Cox E.C."/>
            <person name="Chisholm R.L."/>
            <person name="Gibbs R.A."/>
            <person name="Loomis W.F."/>
            <person name="Platzer M."/>
            <person name="Kay R.R."/>
            <person name="Williams J.G."/>
            <person name="Dear P.H."/>
            <person name="Noegel A.A."/>
            <person name="Barrell B.G."/>
            <person name="Kuspa A."/>
        </authorList>
    </citation>
    <scope>NUCLEOTIDE SEQUENCE [LARGE SCALE GENOMIC DNA]</scope>
    <source>
        <strain>AX4</strain>
    </source>
</reference>
<gene>
    <name type="primary">rasX</name>
    <name type="ORF">DDB_G0270124</name>
</gene>